<name>NQRE_HAEIE</name>
<feature type="chain" id="PRO_1000060192" description="Na(+)-translocating NADH-quinone reductase subunit E">
    <location>
        <begin position="1"/>
        <end position="198"/>
    </location>
</feature>
<feature type="transmembrane region" description="Helical" evidence="1">
    <location>
        <begin position="11"/>
        <end position="31"/>
    </location>
</feature>
<feature type="transmembrane region" description="Helical" evidence="1">
    <location>
        <begin position="35"/>
        <end position="55"/>
    </location>
</feature>
<feature type="transmembrane region" description="Helical" evidence="1">
    <location>
        <begin position="77"/>
        <end position="97"/>
    </location>
</feature>
<feature type="transmembrane region" description="Helical" evidence="1">
    <location>
        <begin position="110"/>
        <end position="130"/>
    </location>
</feature>
<feature type="transmembrane region" description="Helical" evidence="1">
    <location>
        <begin position="140"/>
        <end position="160"/>
    </location>
</feature>
<feature type="transmembrane region" description="Helical" evidence="1">
    <location>
        <begin position="176"/>
        <end position="196"/>
    </location>
</feature>
<protein>
    <recommendedName>
        <fullName evidence="1">Na(+)-translocating NADH-quinone reductase subunit E</fullName>
        <shortName evidence="1">Na(+)-NQR subunit E</shortName>
        <shortName evidence="1">Na(+)-translocating NQR subunit E</shortName>
        <ecNumber evidence="1">7.2.1.1</ecNumber>
    </recommendedName>
    <alternativeName>
        <fullName evidence="1">NQR complex subunit E</fullName>
    </alternativeName>
    <alternativeName>
        <fullName evidence="1">NQR-1 subunit E</fullName>
    </alternativeName>
</protein>
<comment type="function">
    <text evidence="1">NQR complex catalyzes the reduction of ubiquinone-1 to ubiquinol by two successive reactions, coupled with the transport of Na(+) ions from the cytoplasm to the periplasm. NqrA to NqrE are probably involved in the second step, the conversion of ubisemiquinone to ubiquinol.</text>
</comment>
<comment type="catalytic activity">
    <reaction evidence="1">
        <text>a ubiquinone + n Na(+)(in) + NADH + H(+) = a ubiquinol + n Na(+)(out) + NAD(+)</text>
        <dbReference type="Rhea" id="RHEA:47748"/>
        <dbReference type="Rhea" id="RHEA-COMP:9565"/>
        <dbReference type="Rhea" id="RHEA-COMP:9566"/>
        <dbReference type="ChEBI" id="CHEBI:15378"/>
        <dbReference type="ChEBI" id="CHEBI:16389"/>
        <dbReference type="ChEBI" id="CHEBI:17976"/>
        <dbReference type="ChEBI" id="CHEBI:29101"/>
        <dbReference type="ChEBI" id="CHEBI:57540"/>
        <dbReference type="ChEBI" id="CHEBI:57945"/>
        <dbReference type="EC" id="7.2.1.1"/>
    </reaction>
</comment>
<comment type="subunit">
    <text evidence="1">Composed of six subunits; NqrA, NqrB, NqrC, NqrD, NqrE and NqrF.</text>
</comment>
<comment type="subcellular location">
    <subcellularLocation>
        <location evidence="1">Cell inner membrane</location>
        <topology evidence="1">Multi-pass membrane protein</topology>
    </subcellularLocation>
</comment>
<comment type="similarity">
    <text evidence="1">Belongs to the NqrDE/RnfAE family.</text>
</comment>
<organism>
    <name type="scientific">Haemophilus influenzae (strain PittEE)</name>
    <dbReference type="NCBI Taxonomy" id="374930"/>
    <lineage>
        <taxon>Bacteria</taxon>
        <taxon>Pseudomonadati</taxon>
        <taxon>Pseudomonadota</taxon>
        <taxon>Gammaproteobacteria</taxon>
        <taxon>Pasteurellales</taxon>
        <taxon>Pasteurellaceae</taxon>
        <taxon>Haemophilus</taxon>
    </lineage>
</organism>
<keyword id="KW-0997">Cell inner membrane</keyword>
<keyword id="KW-1003">Cell membrane</keyword>
<keyword id="KW-0406">Ion transport</keyword>
<keyword id="KW-0472">Membrane</keyword>
<keyword id="KW-0520">NAD</keyword>
<keyword id="KW-0915">Sodium</keyword>
<keyword id="KW-0739">Sodium transport</keyword>
<keyword id="KW-1278">Translocase</keyword>
<keyword id="KW-0812">Transmembrane</keyword>
<keyword id="KW-1133">Transmembrane helix</keyword>
<keyword id="KW-0813">Transport</keyword>
<keyword id="KW-0830">Ubiquinone</keyword>
<reference key="1">
    <citation type="journal article" date="2007" name="Genome Biol.">
        <title>Characterization and modeling of the Haemophilus influenzae core and supragenomes based on the complete genomic sequences of Rd and 12 clinical nontypeable strains.</title>
        <authorList>
            <person name="Hogg J.S."/>
            <person name="Hu F.Z."/>
            <person name="Janto B."/>
            <person name="Boissy R."/>
            <person name="Hayes J."/>
            <person name="Keefe R."/>
            <person name="Post J.C."/>
            <person name="Ehrlich G.D."/>
        </authorList>
    </citation>
    <scope>NUCLEOTIDE SEQUENCE [LARGE SCALE GENOMIC DNA]</scope>
    <source>
        <strain>PittEE</strain>
    </source>
</reference>
<gene>
    <name evidence="1" type="primary">nqrE</name>
    <name type="ordered locus">CGSHiEE_02375</name>
</gene>
<evidence type="ECO:0000255" key="1">
    <source>
        <dbReference type="HAMAP-Rule" id="MF_00429"/>
    </source>
</evidence>
<accession>A5UAX5</accession>
<proteinExistence type="inferred from homology"/>
<sequence>MEHYISLFVKAVFIENMALSFFLGMCTFLAVSKKVSTAFGLGIAVTFVLGIAVPVNQLIYANVLKENALIEGVDLSFLNFITFIGVIAGLVQILEMVLDKFMPSLYNALGIFLPLIAVNCAIFGGVSFMVQRDYNFPESIVYGFGSGLGWMLAIVALAGLTEKMKYADIPAGLKGLGITFISVGLMALGFMSFSGIQL</sequence>
<dbReference type="EC" id="7.2.1.1" evidence="1"/>
<dbReference type="EMBL" id="CP000671">
    <property type="protein sequence ID" value="ABQ97926.1"/>
    <property type="molecule type" value="Genomic_DNA"/>
</dbReference>
<dbReference type="SMR" id="A5UAX5"/>
<dbReference type="KEGG" id="hip:CGSHiEE_02375"/>
<dbReference type="HOGENOM" id="CLU_095255_0_0_6"/>
<dbReference type="GO" id="GO:0009276">
    <property type="term" value="C:Gram-negative-bacterium-type cell wall"/>
    <property type="evidence" value="ECO:0007669"/>
    <property type="project" value="InterPro"/>
</dbReference>
<dbReference type="GO" id="GO:0005886">
    <property type="term" value="C:plasma membrane"/>
    <property type="evidence" value="ECO:0007669"/>
    <property type="project" value="UniProtKB-SubCell"/>
</dbReference>
<dbReference type="GO" id="GO:0016655">
    <property type="term" value="F:oxidoreductase activity, acting on NAD(P)H, quinone or similar compound as acceptor"/>
    <property type="evidence" value="ECO:0007669"/>
    <property type="project" value="UniProtKB-UniRule"/>
</dbReference>
<dbReference type="GO" id="GO:0022904">
    <property type="term" value="P:respiratory electron transport chain"/>
    <property type="evidence" value="ECO:0007669"/>
    <property type="project" value="InterPro"/>
</dbReference>
<dbReference type="GO" id="GO:0006814">
    <property type="term" value="P:sodium ion transport"/>
    <property type="evidence" value="ECO:0007669"/>
    <property type="project" value="UniProtKB-UniRule"/>
</dbReference>
<dbReference type="HAMAP" id="MF_00429">
    <property type="entry name" value="NqrE"/>
    <property type="match status" value="1"/>
</dbReference>
<dbReference type="InterPro" id="IPR003667">
    <property type="entry name" value="NqrDE/RnfAE"/>
</dbReference>
<dbReference type="InterPro" id="IPR050133">
    <property type="entry name" value="NqrDE/RnfAE_oxidrdctase"/>
</dbReference>
<dbReference type="InterPro" id="IPR010967">
    <property type="entry name" value="NqrE"/>
</dbReference>
<dbReference type="NCBIfam" id="TIGR01940">
    <property type="entry name" value="nqrE"/>
    <property type="match status" value="1"/>
</dbReference>
<dbReference type="PANTHER" id="PTHR30335">
    <property type="entry name" value="INTEGRAL MEMBRANE PROTEIN OF SOXR-REDUCING COMPLEX"/>
    <property type="match status" value="1"/>
</dbReference>
<dbReference type="PANTHER" id="PTHR30335:SF1">
    <property type="entry name" value="NA(+)-TRANSLOCATING NADH-QUINONE REDUCTASE SUBUNIT E"/>
    <property type="match status" value="1"/>
</dbReference>
<dbReference type="Pfam" id="PF02508">
    <property type="entry name" value="Rnf-Nqr"/>
    <property type="match status" value="1"/>
</dbReference>
<dbReference type="PIRSF" id="PIRSF006102">
    <property type="entry name" value="NQR_DE"/>
    <property type="match status" value="1"/>
</dbReference>